<gene>
    <name type="primary">EFT1</name>
    <name type="ordered locus">YOR133W</name>
    <name type="ORF">O3317</name>
    <name type="ORF">YOR3317W</name>
</gene>
<gene>
    <name type="primary">EFT2</name>
    <name type="ordered locus">YDR385W</name>
</gene>
<dbReference type="EC" id="3.6.5.-" evidence="8 16"/>
<dbReference type="EMBL" id="M59369">
    <property type="protein sequence ID" value="AAA21646.1"/>
    <property type="molecule type" value="Genomic_DNA"/>
</dbReference>
<dbReference type="EMBL" id="M59370">
    <property type="protein sequence ID" value="AAA51398.1"/>
    <property type="molecule type" value="Genomic_DNA"/>
</dbReference>
<dbReference type="EMBL" id="X90518">
    <property type="protein sequence ID" value="CAA62116.1"/>
    <property type="molecule type" value="Genomic_DNA"/>
</dbReference>
<dbReference type="EMBL" id="X94335">
    <property type="protein sequence ID" value="CAA64052.1"/>
    <property type="molecule type" value="Genomic_DNA"/>
</dbReference>
<dbReference type="EMBL" id="U32274">
    <property type="protein sequence ID" value="AAB64827.1"/>
    <property type="molecule type" value="Genomic_DNA"/>
</dbReference>
<dbReference type="EMBL" id="U28373">
    <property type="protein sequence ID" value="AAB64821.1"/>
    <property type="molecule type" value="Genomic_DNA"/>
</dbReference>
<dbReference type="EMBL" id="Z75041">
    <property type="protein sequence ID" value="CAA99332.1"/>
    <property type="molecule type" value="Genomic_DNA"/>
</dbReference>
<dbReference type="EMBL" id="AY497635">
    <property type="protein sequence ID" value="AAT12549.1"/>
    <property type="molecule type" value="Genomic_DNA"/>
</dbReference>
<dbReference type="EMBL" id="BK006948">
    <property type="protein sequence ID" value="DAA10907.1"/>
    <property type="molecule type" value="Genomic_DNA"/>
</dbReference>
<dbReference type="EMBL" id="BK006938">
    <property type="protein sequence ID" value="DAA12229.1"/>
    <property type="molecule type" value="Genomic_DNA"/>
</dbReference>
<dbReference type="PIR" id="A41778">
    <property type="entry name" value="A41778"/>
</dbReference>
<dbReference type="RefSeq" id="NP_010673.1">
    <property type="nucleotide sequence ID" value="NM_001180693.1"/>
</dbReference>
<dbReference type="RefSeq" id="NP_014776.1">
    <property type="nucleotide sequence ID" value="NM_001183552.1"/>
</dbReference>
<dbReference type="PDB" id="1N0U">
    <property type="method" value="X-ray"/>
    <property type="resolution" value="2.12 A"/>
    <property type="chains" value="A=1-842"/>
</dbReference>
<dbReference type="PDB" id="1N0V">
    <property type="method" value="X-ray"/>
    <property type="resolution" value="2.85 A"/>
    <property type="chains" value="C/D=1-842"/>
</dbReference>
<dbReference type="PDB" id="1U2R">
    <property type="method" value="X-ray"/>
    <property type="resolution" value="2.60 A"/>
    <property type="chains" value="A=1-842"/>
</dbReference>
<dbReference type="PDB" id="1ZM2">
    <property type="method" value="X-ray"/>
    <property type="resolution" value="3.07 A"/>
    <property type="chains" value="A/C/E=1-842"/>
</dbReference>
<dbReference type="PDB" id="1ZM3">
    <property type="method" value="X-ray"/>
    <property type="resolution" value="3.07 A"/>
    <property type="chains" value="A/C/E=1-842"/>
</dbReference>
<dbReference type="PDB" id="1ZM4">
    <property type="method" value="X-ray"/>
    <property type="resolution" value="2.90 A"/>
    <property type="chains" value="A/C/E=1-842"/>
</dbReference>
<dbReference type="PDB" id="1ZM9">
    <property type="method" value="X-ray"/>
    <property type="resolution" value="2.80 A"/>
    <property type="chains" value="A/C/E=1-842"/>
</dbReference>
<dbReference type="PDB" id="2E1R">
    <property type="method" value="X-ray"/>
    <property type="resolution" value="3.15 A"/>
    <property type="chains" value="A=1-842"/>
</dbReference>
<dbReference type="PDB" id="2NPF">
    <property type="method" value="X-ray"/>
    <property type="resolution" value="2.90 A"/>
    <property type="chains" value="A/B=1-842"/>
</dbReference>
<dbReference type="PDB" id="2P8W">
    <property type="method" value="EM"/>
    <property type="resolution" value="11.30 A"/>
    <property type="chains" value="T=1-842"/>
</dbReference>
<dbReference type="PDB" id="2P8X">
    <property type="method" value="EM"/>
    <property type="resolution" value="9.70 A"/>
    <property type="chains" value="T=1-842"/>
</dbReference>
<dbReference type="PDB" id="2P8Y">
    <property type="method" value="EM"/>
    <property type="resolution" value="11.70 A"/>
    <property type="chains" value="T=1-842"/>
</dbReference>
<dbReference type="PDB" id="2P8Z">
    <property type="method" value="EM"/>
    <property type="resolution" value="8.90 A"/>
    <property type="chains" value="T=1-842"/>
</dbReference>
<dbReference type="PDB" id="2ZIT">
    <property type="method" value="X-ray"/>
    <property type="resolution" value="3.00 A"/>
    <property type="chains" value="A/C/E=1-842"/>
</dbReference>
<dbReference type="PDB" id="3B78">
    <property type="method" value="X-ray"/>
    <property type="resolution" value="2.50 A"/>
    <property type="chains" value="A/C/E=1-842"/>
</dbReference>
<dbReference type="PDB" id="3B82">
    <property type="method" value="X-ray"/>
    <property type="resolution" value="2.35 A"/>
    <property type="chains" value="A/C/E=1-842"/>
</dbReference>
<dbReference type="PDB" id="3B8H">
    <property type="method" value="X-ray"/>
    <property type="resolution" value="2.50 A"/>
    <property type="chains" value="A/C/E=1-842"/>
</dbReference>
<dbReference type="PDB" id="3DNY">
    <property type="method" value="EM"/>
    <property type="resolution" value="12.60 A"/>
    <property type="chains" value="T=1-842"/>
</dbReference>
<dbReference type="PDB" id="4V4B">
    <property type="method" value="EM"/>
    <property type="resolution" value="11.70 A"/>
    <property type="chains" value="AT=1-842"/>
</dbReference>
<dbReference type="PDB" id="5JUO">
    <property type="method" value="EM"/>
    <property type="resolution" value="4.00 A"/>
    <property type="chains" value="DC=1-842"/>
</dbReference>
<dbReference type="PDB" id="5JUP">
    <property type="method" value="EM"/>
    <property type="resolution" value="3.50 A"/>
    <property type="chains" value="DC=1-842"/>
</dbReference>
<dbReference type="PDB" id="5JUS">
    <property type="method" value="EM"/>
    <property type="resolution" value="4.20 A"/>
    <property type="chains" value="DC=1-842"/>
</dbReference>
<dbReference type="PDB" id="5JUT">
    <property type="method" value="EM"/>
    <property type="resolution" value="4.00 A"/>
    <property type="chains" value="DC=1-842"/>
</dbReference>
<dbReference type="PDB" id="5JUU">
    <property type="method" value="EM"/>
    <property type="resolution" value="4.00 A"/>
    <property type="chains" value="DC=1-842"/>
</dbReference>
<dbReference type="PDB" id="6GQ1">
    <property type="method" value="EM"/>
    <property type="resolution" value="4.40 A"/>
    <property type="chains" value="AZ=3-842"/>
</dbReference>
<dbReference type="PDB" id="6GQB">
    <property type="method" value="EM"/>
    <property type="resolution" value="3.90 A"/>
    <property type="chains" value="AZ=3-842"/>
</dbReference>
<dbReference type="PDB" id="6GQV">
    <property type="method" value="EM"/>
    <property type="resolution" value="4.00 A"/>
    <property type="chains" value="AX=3-839"/>
</dbReference>
<dbReference type="PDB" id="8CDR">
    <property type="method" value="EM"/>
    <property type="resolution" value="2.04 A"/>
    <property type="chains" value="Aa=1-842"/>
</dbReference>
<dbReference type="PDB" id="8EUB">
    <property type="method" value="EM"/>
    <property type="resolution" value="2.52 A"/>
    <property type="chains" value="DC=1-842"/>
</dbReference>
<dbReference type="PDB" id="8EVQ">
    <property type="method" value="EM"/>
    <property type="resolution" value="2.72 A"/>
    <property type="chains" value="DC=1-842"/>
</dbReference>
<dbReference type="PDB" id="8EVR">
    <property type="method" value="EM"/>
    <property type="resolution" value="2.87 A"/>
    <property type="chains" value="DC=1-842"/>
</dbReference>
<dbReference type="PDB" id="8EVS">
    <property type="method" value="EM"/>
    <property type="resolution" value="2.62 A"/>
    <property type="chains" value="DC=1-842"/>
</dbReference>
<dbReference type="PDB" id="8EWB">
    <property type="method" value="EM"/>
    <property type="resolution" value="2.87 A"/>
    <property type="chains" value="DC=1-842"/>
</dbReference>
<dbReference type="PDB" id="8K2D">
    <property type="method" value="EM"/>
    <property type="resolution" value="3.20 A"/>
    <property type="chains" value="CD=1-842"/>
</dbReference>
<dbReference type="PDB" id="8T3A">
    <property type="method" value="EM"/>
    <property type="resolution" value="2.86 A"/>
    <property type="chains" value="DC=1-842"/>
</dbReference>
<dbReference type="PDB" id="8T3B">
    <property type="method" value="EM"/>
    <property type="resolution" value="3.08 A"/>
    <property type="chains" value="DC=1-842"/>
</dbReference>
<dbReference type="PDB" id="8T3C">
    <property type="method" value="EM"/>
    <property type="resolution" value="3.86 A"/>
    <property type="chains" value="DC=1-842"/>
</dbReference>
<dbReference type="PDB" id="8T3D">
    <property type="method" value="EM"/>
    <property type="resolution" value="2.95 A"/>
    <property type="chains" value="DC=1-842"/>
</dbReference>
<dbReference type="PDB" id="8T3E">
    <property type="method" value="EM"/>
    <property type="resolution" value="3.04 A"/>
    <property type="chains" value="DC=1-842"/>
</dbReference>
<dbReference type="PDB" id="8T3F">
    <property type="method" value="EM"/>
    <property type="resolution" value="3.09 A"/>
    <property type="chains" value="DC=1-842"/>
</dbReference>
<dbReference type="PDB" id="8XU8">
    <property type="method" value="EM"/>
    <property type="resolution" value="3.40 A"/>
    <property type="chains" value="x=1-842"/>
</dbReference>
<dbReference type="PDB" id="8YLD">
    <property type="method" value="EM"/>
    <property type="resolution" value="3.90 A"/>
    <property type="chains" value="x=1-842"/>
</dbReference>
<dbReference type="PDB" id="8YLR">
    <property type="method" value="EM"/>
    <property type="resolution" value="3.90 A"/>
    <property type="chains" value="x=1-842"/>
</dbReference>
<dbReference type="PDBsum" id="1N0U"/>
<dbReference type="PDBsum" id="1N0V"/>
<dbReference type="PDBsum" id="1U2R"/>
<dbReference type="PDBsum" id="1ZM2"/>
<dbReference type="PDBsum" id="1ZM3"/>
<dbReference type="PDBsum" id="1ZM4"/>
<dbReference type="PDBsum" id="1ZM9"/>
<dbReference type="PDBsum" id="2E1R"/>
<dbReference type="PDBsum" id="2NPF"/>
<dbReference type="PDBsum" id="2P8W"/>
<dbReference type="PDBsum" id="2P8X"/>
<dbReference type="PDBsum" id="2P8Y"/>
<dbReference type="PDBsum" id="2P8Z"/>
<dbReference type="PDBsum" id="2ZIT"/>
<dbReference type="PDBsum" id="3B78"/>
<dbReference type="PDBsum" id="3B82"/>
<dbReference type="PDBsum" id="3B8H"/>
<dbReference type="PDBsum" id="3DNY"/>
<dbReference type="PDBsum" id="4V4B"/>
<dbReference type="PDBsum" id="5JUO"/>
<dbReference type="PDBsum" id="5JUP"/>
<dbReference type="PDBsum" id="5JUS"/>
<dbReference type="PDBsum" id="5JUT"/>
<dbReference type="PDBsum" id="5JUU"/>
<dbReference type="PDBsum" id="6GQ1"/>
<dbReference type="PDBsum" id="6GQB"/>
<dbReference type="PDBsum" id="6GQV"/>
<dbReference type="PDBsum" id="8CDR"/>
<dbReference type="PDBsum" id="8EUB"/>
<dbReference type="PDBsum" id="8EVQ"/>
<dbReference type="PDBsum" id="8EVR"/>
<dbReference type="PDBsum" id="8EVS"/>
<dbReference type="PDBsum" id="8EWB"/>
<dbReference type="PDBsum" id="8K2D"/>
<dbReference type="PDBsum" id="8T3A"/>
<dbReference type="PDBsum" id="8T3B"/>
<dbReference type="PDBsum" id="8T3C"/>
<dbReference type="PDBsum" id="8T3D"/>
<dbReference type="PDBsum" id="8T3E"/>
<dbReference type="PDBsum" id="8T3F"/>
<dbReference type="PDBsum" id="8XU8"/>
<dbReference type="PDBsum" id="8YLD"/>
<dbReference type="PDBsum" id="8YLR"/>
<dbReference type="EMDB" id="EMD-0047"/>
<dbReference type="EMDB" id="EMD-0048"/>
<dbReference type="EMDB" id="EMD-0049"/>
<dbReference type="EMDB" id="EMD-1067"/>
<dbReference type="EMDB" id="EMD-1342"/>
<dbReference type="EMDB" id="EMD-28610"/>
<dbReference type="EMDB" id="EMD-28633"/>
<dbReference type="EMDB" id="EMD-28634"/>
<dbReference type="EMDB" id="EMD-28635"/>
<dbReference type="EMDB" id="EMD-28642"/>
<dbReference type="EMDB" id="EMD-36839"/>
<dbReference type="EMDB" id="EMD-38660"/>
<dbReference type="EMDB" id="EMD-40997"/>
<dbReference type="EMDB" id="EMD-40998"/>
<dbReference type="EMDB" id="EMD-40999"/>
<dbReference type="EMDB" id="EMD-41000"/>
<dbReference type="EMDB" id="EMD-41001"/>
<dbReference type="EMDB" id="EMD-41002"/>
<dbReference type="EMDB" id="EMD-6643"/>
<dbReference type="EMDB" id="EMD-6644"/>
<dbReference type="EMDB" id="EMD-6645"/>
<dbReference type="EMDB" id="EMD-6646"/>
<dbReference type="EMDB" id="EMD-6647"/>
<dbReference type="EMDB" id="EMD-6648"/>
<dbReference type="EMDB" id="EMD-6649"/>
<dbReference type="EMDB" id="EMD-6650"/>
<dbReference type="EMDB" id="EMD-6652"/>
<dbReference type="EMDB" id="EMD-6653"/>
<dbReference type="SMR" id="P32324"/>
<dbReference type="BioGRID" id="32446">
    <property type="interactions" value="247"/>
</dbReference>
<dbReference type="BioGRID" id="34529">
    <property type="interactions" value="179"/>
</dbReference>
<dbReference type="DIP" id="DIP-4911N"/>
<dbReference type="FunCoup" id="P32324">
    <property type="interactions" value="1581"/>
</dbReference>
<dbReference type="IntAct" id="P32324">
    <property type="interactions" value="248"/>
</dbReference>
<dbReference type="MINT" id="P32324"/>
<dbReference type="STRING" id="4932.YDR385W"/>
<dbReference type="iPTMnet" id="P32324"/>
<dbReference type="PaxDb" id="4932-YDR385W"/>
<dbReference type="PeptideAtlas" id="P32324"/>
<dbReference type="TopDownProteomics" id="P32324"/>
<dbReference type="EnsemblFungi" id="YDR385W_mRNA">
    <property type="protein sequence ID" value="YDR385W"/>
    <property type="gene ID" value="YDR385W"/>
</dbReference>
<dbReference type="EnsemblFungi" id="YOR133W_mRNA">
    <property type="protein sequence ID" value="YOR133W"/>
    <property type="gene ID" value="YOR133W"/>
</dbReference>
<dbReference type="GeneID" id="851993"/>
<dbReference type="GeneID" id="854301"/>
<dbReference type="KEGG" id="sce:YDR385W"/>
<dbReference type="KEGG" id="sce:YOR133W"/>
<dbReference type="AGR" id="SGD:S000002793"/>
<dbReference type="AGR" id="SGD:S000005659"/>
<dbReference type="SGD" id="S000005659">
    <property type="gene designation" value="EFT1"/>
</dbReference>
<dbReference type="SGD" id="S000002793">
    <property type="gene designation" value="EFT2"/>
</dbReference>
<dbReference type="VEuPathDB" id="FungiDB:YDR385W"/>
<dbReference type="VEuPathDB" id="FungiDB:YOR133W"/>
<dbReference type="eggNOG" id="KOG0469">
    <property type="taxonomic scope" value="Eukaryota"/>
</dbReference>
<dbReference type="GeneTree" id="ENSGT00940000154662"/>
<dbReference type="HOGENOM" id="CLU_002794_11_2_1"/>
<dbReference type="InParanoid" id="P32324"/>
<dbReference type="OMA" id="ASWNTEN"/>
<dbReference type="OrthoDB" id="364892at2759"/>
<dbReference type="BioCyc" id="YEAST:G3O-29933-MONOMER"/>
<dbReference type="BioCyc" id="YEAST:G3O-33657-MONOMER"/>
<dbReference type="Reactome" id="R-SCE-156902">
    <property type="pathway name" value="Peptide chain elongation"/>
</dbReference>
<dbReference type="Reactome" id="R-SCE-5358493">
    <property type="pathway name" value="Synthesis of diphthamide-EEF2"/>
</dbReference>
<dbReference type="Reactome" id="R-SCE-6798695">
    <property type="pathway name" value="Neutrophil degranulation"/>
</dbReference>
<dbReference type="Reactome" id="R-SCE-8876725">
    <property type="pathway name" value="Protein methylation"/>
</dbReference>
<dbReference type="UniPathway" id="UPA00345"/>
<dbReference type="CD-CODE" id="E03F929F">
    <property type="entry name" value="Stress granule"/>
</dbReference>
<dbReference type="EvolutionaryTrace" id="P32324"/>
<dbReference type="PRO" id="PR:P32324"/>
<dbReference type="Proteomes" id="UP000002311">
    <property type="component" value="Chromosome IV"/>
</dbReference>
<dbReference type="Proteomes" id="UP000002311">
    <property type="component" value="Chromosome XV"/>
</dbReference>
<dbReference type="RNAct" id="P32324">
    <property type="molecule type" value="protein"/>
</dbReference>
<dbReference type="GO" id="GO:0005829">
    <property type="term" value="C:cytosol"/>
    <property type="evidence" value="ECO:0007005"/>
    <property type="project" value="SGD"/>
</dbReference>
<dbReference type="GO" id="GO:1990904">
    <property type="term" value="C:ribonucleoprotein complex"/>
    <property type="evidence" value="ECO:0000318"/>
    <property type="project" value="GO_Central"/>
</dbReference>
<dbReference type="GO" id="GO:0005525">
    <property type="term" value="F:GTP binding"/>
    <property type="evidence" value="ECO:0007669"/>
    <property type="project" value="UniProtKB-KW"/>
</dbReference>
<dbReference type="GO" id="GO:0003924">
    <property type="term" value="F:GTPase activity"/>
    <property type="evidence" value="ECO:0000314"/>
    <property type="project" value="UniProtKB"/>
</dbReference>
<dbReference type="GO" id="GO:0042802">
    <property type="term" value="F:identical protein binding"/>
    <property type="evidence" value="ECO:0000353"/>
    <property type="project" value="IntAct"/>
</dbReference>
<dbReference type="GO" id="GO:0051087">
    <property type="term" value="F:protein-folding chaperone binding"/>
    <property type="evidence" value="ECO:0000314"/>
    <property type="project" value="SGD"/>
</dbReference>
<dbReference type="GO" id="GO:0043022">
    <property type="term" value="F:ribosome binding"/>
    <property type="evidence" value="ECO:0000314"/>
    <property type="project" value="SGD"/>
</dbReference>
<dbReference type="GO" id="GO:0019843">
    <property type="term" value="F:rRNA binding"/>
    <property type="evidence" value="ECO:0007669"/>
    <property type="project" value="UniProtKB-KW"/>
</dbReference>
<dbReference type="GO" id="GO:0003746">
    <property type="term" value="F:translation elongation factor activity"/>
    <property type="evidence" value="ECO:0000314"/>
    <property type="project" value="UniProtKB"/>
</dbReference>
<dbReference type="GO" id="GO:1990145">
    <property type="term" value="P:maintenance of translational fidelity"/>
    <property type="evidence" value="ECO:0000315"/>
    <property type="project" value="SGD"/>
</dbReference>
<dbReference type="GO" id="GO:0045901">
    <property type="term" value="P:positive regulation of translational elongation"/>
    <property type="evidence" value="ECO:0000315"/>
    <property type="project" value="SGD"/>
</dbReference>
<dbReference type="GO" id="GO:0006414">
    <property type="term" value="P:translational elongation"/>
    <property type="evidence" value="ECO:0000314"/>
    <property type="project" value="UniProtKB"/>
</dbReference>
<dbReference type="CDD" id="cd01681">
    <property type="entry name" value="aeEF2_snRNP_like_IV"/>
    <property type="match status" value="1"/>
</dbReference>
<dbReference type="CDD" id="cd04096">
    <property type="entry name" value="eEF2_snRNP_like_C"/>
    <property type="match status" value="1"/>
</dbReference>
<dbReference type="CDD" id="cd01885">
    <property type="entry name" value="EF2"/>
    <property type="match status" value="1"/>
</dbReference>
<dbReference type="CDD" id="cd16261">
    <property type="entry name" value="EF2_snRNP_III"/>
    <property type="match status" value="1"/>
</dbReference>
<dbReference type="CDD" id="cd03700">
    <property type="entry name" value="EF2_snRNP_like_II"/>
    <property type="match status" value="1"/>
</dbReference>
<dbReference type="FunFam" id="2.40.30.10:FF:000010">
    <property type="entry name" value="Translation elongation factor 2"/>
    <property type="match status" value="1"/>
</dbReference>
<dbReference type="FunFam" id="3.30.230.10:FF:000006">
    <property type="entry name" value="Translation elongation factor 2"/>
    <property type="match status" value="1"/>
</dbReference>
<dbReference type="FunFam" id="3.30.70.240:FF:000003">
    <property type="entry name" value="Translation elongation factor 2"/>
    <property type="match status" value="1"/>
</dbReference>
<dbReference type="FunFam" id="3.30.70.870:FF:000002">
    <property type="entry name" value="Translation elongation factor 2"/>
    <property type="match status" value="1"/>
</dbReference>
<dbReference type="FunFam" id="3.40.50.300:FF:000058">
    <property type="entry name" value="Translation elongation factor 2"/>
    <property type="match status" value="1"/>
</dbReference>
<dbReference type="Gene3D" id="3.30.230.10">
    <property type="match status" value="1"/>
</dbReference>
<dbReference type="Gene3D" id="3.30.70.240">
    <property type="match status" value="1"/>
</dbReference>
<dbReference type="Gene3D" id="3.30.70.870">
    <property type="entry name" value="Elongation Factor G (Translational Gtpase), domain 3"/>
    <property type="match status" value="1"/>
</dbReference>
<dbReference type="Gene3D" id="3.40.50.300">
    <property type="entry name" value="P-loop containing nucleotide triphosphate hydrolases"/>
    <property type="match status" value="1"/>
</dbReference>
<dbReference type="Gene3D" id="2.40.30.10">
    <property type="entry name" value="Translation factors"/>
    <property type="match status" value="1"/>
</dbReference>
<dbReference type="InterPro" id="IPR041095">
    <property type="entry name" value="EFG_II"/>
</dbReference>
<dbReference type="InterPro" id="IPR035647">
    <property type="entry name" value="EFG_III/V"/>
</dbReference>
<dbReference type="InterPro" id="IPR000640">
    <property type="entry name" value="EFG_V-like"/>
</dbReference>
<dbReference type="InterPro" id="IPR004161">
    <property type="entry name" value="EFTu-like_2"/>
</dbReference>
<dbReference type="InterPro" id="IPR031157">
    <property type="entry name" value="G_TR_CS"/>
</dbReference>
<dbReference type="InterPro" id="IPR027417">
    <property type="entry name" value="P-loop_NTPase"/>
</dbReference>
<dbReference type="InterPro" id="IPR020568">
    <property type="entry name" value="Ribosomal_Su5_D2-typ_SF"/>
</dbReference>
<dbReference type="InterPro" id="IPR014721">
    <property type="entry name" value="Ribsml_uS5_D2-typ_fold_subgr"/>
</dbReference>
<dbReference type="InterPro" id="IPR005225">
    <property type="entry name" value="Small_GTP-bd"/>
</dbReference>
<dbReference type="InterPro" id="IPR000795">
    <property type="entry name" value="T_Tr_GTP-bd_dom"/>
</dbReference>
<dbReference type="InterPro" id="IPR009000">
    <property type="entry name" value="Transl_B-barrel_sf"/>
</dbReference>
<dbReference type="InterPro" id="IPR005517">
    <property type="entry name" value="Transl_elong_EFG/EF2_IV"/>
</dbReference>
<dbReference type="NCBIfam" id="TIGR00231">
    <property type="entry name" value="small_GTP"/>
    <property type="match status" value="1"/>
</dbReference>
<dbReference type="PANTHER" id="PTHR42908:SF10">
    <property type="entry name" value="EUKARYOTIC TRANSLATION ELONGATION FACTOR 2"/>
    <property type="match status" value="1"/>
</dbReference>
<dbReference type="PANTHER" id="PTHR42908">
    <property type="entry name" value="TRANSLATION ELONGATION FACTOR-RELATED"/>
    <property type="match status" value="1"/>
</dbReference>
<dbReference type="Pfam" id="PF00679">
    <property type="entry name" value="EFG_C"/>
    <property type="match status" value="1"/>
</dbReference>
<dbReference type="Pfam" id="PF14492">
    <property type="entry name" value="EFG_III"/>
    <property type="match status" value="1"/>
</dbReference>
<dbReference type="Pfam" id="PF03764">
    <property type="entry name" value="EFG_IV"/>
    <property type="match status" value="1"/>
</dbReference>
<dbReference type="Pfam" id="PF00009">
    <property type="entry name" value="GTP_EFTU"/>
    <property type="match status" value="1"/>
</dbReference>
<dbReference type="Pfam" id="PF03144">
    <property type="entry name" value="GTP_EFTU_D2"/>
    <property type="match status" value="1"/>
</dbReference>
<dbReference type="PRINTS" id="PR00315">
    <property type="entry name" value="ELONGATNFCT"/>
</dbReference>
<dbReference type="SMART" id="SM00838">
    <property type="entry name" value="EFG_C"/>
    <property type="match status" value="1"/>
</dbReference>
<dbReference type="SMART" id="SM00889">
    <property type="entry name" value="EFG_IV"/>
    <property type="match status" value="1"/>
</dbReference>
<dbReference type="SUPFAM" id="SSF54980">
    <property type="entry name" value="EF-G C-terminal domain-like"/>
    <property type="match status" value="2"/>
</dbReference>
<dbReference type="SUPFAM" id="SSF52540">
    <property type="entry name" value="P-loop containing nucleoside triphosphate hydrolases"/>
    <property type="match status" value="1"/>
</dbReference>
<dbReference type="SUPFAM" id="SSF54211">
    <property type="entry name" value="Ribosomal protein S5 domain 2-like"/>
    <property type="match status" value="1"/>
</dbReference>
<dbReference type="SUPFAM" id="SSF50447">
    <property type="entry name" value="Translation proteins"/>
    <property type="match status" value="1"/>
</dbReference>
<dbReference type="PROSITE" id="PS00301">
    <property type="entry name" value="G_TR_1"/>
    <property type="match status" value="1"/>
</dbReference>
<dbReference type="PROSITE" id="PS51722">
    <property type="entry name" value="G_TR_2"/>
    <property type="match status" value="1"/>
</dbReference>
<accession>P32324</accession>
<accession>D6VT19</accession>
<accession>Q6JEF7</accession>
<protein>
    <recommendedName>
        <fullName>Elongation factor 2</fullName>
        <shortName>EF-2</shortName>
        <ecNumber evidence="8 16">3.6.5.-</ecNumber>
    </recommendedName>
    <alternativeName>
        <fullName>Eukaryotic elongation factor 2</fullName>
        <shortName>eEF2</shortName>
    </alternativeName>
    <alternativeName>
        <fullName>Ribosomal translocase</fullName>
    </alternativeName>
    <alternativeName>
        <fullName>Translation elongation factor 2</fullName>
    </alternativeName>
</protein>
<sequence length="842" mass="93289">MVAFTVDQMRSLMDKVTNVRNMSVIAHVDHGKSTLTDSLVQRAGIISAAKAGEARFTDTRKDEQERGITIKSTAISLYSEMSDEDVKEIKQKTDGNSFLINLIDSPGHVDFSSEVTAALRVTDGALVVVDTIEGVCVQTETVLRQALGERIKPVVVINKVDRALLELQVSKEDLYQTFARTVESVNVIVSTYADEVLGDVQVYPARGTVAFGSGLHGWAFTIRQFATRYAKKFGVDKAKMMDRLWGDSFFNPKTKKWTNKDTDAEGKPLERAFNMFILDPIFRLFTAIMNFKKDEIPVLLEKLEIVLKGDEKDLEGKALLKVVMRKFLPAADALLEMIVLHLPSPVTAQAYRAEQLYEGPADDANCIAIKNCDPKADLMLYVSKMVPTSDKGRFYAFGRVFAGTVKSGQKVRIQGPNYVPGKKDDLFIKAIQRVVLMMGRFVEPIDDCPAGNIIGLVGIDQFLLKTGTLTTSETAHNMKVMKFSVSPVVQVAVEVKNANDLPKLVEGLKRLSKSDPCVLTYMSESGEHIVAGTGELHLEICLQDLEHDHAGVPLKISPPVVAYRETVESESSQTALSKSPNKHNRIYLKAEPIDEEVSLAIENGIINPRDDFKARARIMADDYGWDVTDARKIWCFGPDGNGPNLVIDQTKAVQYLHEIKDSVVAAFQWATKEGPIFGEEMRSVRVNILDVTLHADAIHRGGGQIIPTMRRATYAGFLLADPKIQEPVFLVEIQCPEQAVGGIYSVLNKKRGQVVSEEQRPGTPLFTVKAYLPVNESFGFTGELRQATGGQAFPQMVFDHWSTLGSDPLDPTSKAGEIVLAARKRHGMKEEVPGWQEYYDKL</sequence>
<reference key="1">
    <citation type="journal article" date="1992" name="J. Biol. Chem.">
        <title>Saccharomyces cerevisiae elongation factor 2. Genetic cloning, characterization of expression, and G-domain modeling.</title>
        <authorList>
            <person name="Perentesis J.P."/>
            <person name="Phan L.D."/>
            <person name="Laporte D.C."/>
            <person name="Livingston D.M."/>
            <person name="Bodley J.W."/>
        </authorList>
    </citation>
    <scope>NUCLEOTIDE SEQUENCE [GENOMIC DNA] (EFT1 AND EFT2)</scope>
</reference>
<reference key="2">
    <citation type="journal article" date="1996" name="Yeast">
        <title>Sequencing and analysis of 51 kb on the right arm of chromosome XV from Saccharomyces cerevisiae reveals 30 open reading frames.</title>
        <authorList>
            <person name="Wiemann S."/>
            <person name="Rechmann S."/>
            <person name="Benes V."/>
            <person name="Voss H."/>
            <person name="Schwager C."/>
            <person name="Vlcek C."/>
            <person name="Stegemann J."/>
            <person name="Zimmermann J."/>
            <person name="Erfle H."/>
            <person name="Paces V."/>
            <person name="Ansorge W."/>
        </authorList>
    </citation>
    <scope>NUCLEOTIDE SEQUENCE [GENOMIC DNA] (EFT1)</scope>
    <source>
        <strain>ATCC 96604 / S288c / FY1679</strain>
    </source>
</reference>
<reference key="3">
    <citation type="journal article" date="1997" name="Yeast">
        <title>DNA sequencing and analysis of 130 kb from yeast chromosome XV.</title>
        <authorList>
            <person name="Voss H."/>
            <person name="Benes V."/>
            <person name="Andrade M.A."/>
            <person name="Valencia A."/>
            <person name="Rechmann S."/>
            <person name="Teodoru C."/>
            <person name="Schwager C."/>
            <person name="Paces V."/>
            <person name="Sander C."/>
            <person name="Ansorge W."/>
        </authorList>
    </citation>
    <scope>NUCLEOTIDE SEQUENCE [GENOMIC DNA] (EFT1)</scope>
</reference>
<reference key="4">
    <citation type="journal article" date="1997" name="Nature">
        <title>The nucleotide sequence of Saccharomyces cerevisiae chromosome IV.</title>
        <authorList>
            <person name="Jacq C."/>
            <person name="Alt-Moerbe J."/>
            <person name="Andre B."/>
            <person name="Arnold W."/>
            <person name="Bahr A."/>
            <person name="Ballesta J.P.G."/>
            <person name="Bargues M."/>
            <person name="Baron L."/>
            <person name="Becker A."/>
            <person name="Biteau N."/>
            <person name="Bloecker H."/>
            <person name="Blugeon C."/>
            <person name="Boskovic J."/>
            <person name="Brandt P."/>
            <person name="Brueckner M."/>
            <person name="Buitrago M.J."/>
            <person name="Coster F."/>
            <person name="Delaveau T."/>
            <person name="del Rey F."/>
            <person name="Dujon B."/>
            <person name="Eide L.G."/>
            <person name="Garcia-Cantalejo J.M."/>
            <person name="Goffeau A."/>
            <person name="Gomez-Peris A."/>
            <person name="Granotier C."/>
            <person name="Hanemann V."/>
            <person name="Hankeln T."/>
            <person name="Hoheisel J.D."/>
            <person name="Jaeger W."/>
            <person name="Jimenez A."/>
            <person name="Jonniaux J.-L."/>
            <person name="Kraemer C."/>
            <person name="Kuester H."/>
            <person name="Laamanen P."/>
            <person name="Legros Y."/>
            <person name="Louis E.J."/>
            <person name="Moeller-Rieker S."/>
            <person name="Monnet A."/>
            <person name="Moro M."/>
            <person name="Mueller-Auer S."/>
            <person name="Nussbaumer B."/>
            <person name="Paricio N."/>
            <person name="Paulin L."/>
            <person name="Perea J."/>
            <person name="Perez-Alonso M."/>
            <person name="Perez-Ortin J.E."/>
            <person name="Pohl T.M."/>
            <person name="Prydz H."/>
            <person name="Purnelle B."/>
            <person name="Rasmussen S.W."/>
            <person name="Remacha M.A."/>
            <person name="Revuelta J.L."/>
            <person name="Rieger M."/>
            <person name="Salom D."/>
            <person name="Saluz H.P."/>
            <person name="Saiz J.E."/>
            <person name="Saren A.-M."/>
            <person name="Schaefer M."/>
            <person name="Scharfe M."/>
            <person name="Schmidt E.R."/>
            <person name="Schneider C."/>
            <person name="Scholler P."/>
            <person name="Schwarz S."/>
            <person name="Soler-Mira A."/>
            <person name="Urrestarazu L.A."/>
            <person name="Verhasselt P."/>
            <person name="Vissers S."/>
            <person name="Voet M."/>
            <person name="Volckaert G."/>
            <person name="Wagner G."/>
            <person name="Wambutt R."/>
            <person name="Wedler E."/>
            <person name="Wedler H."/>
            <person name="Woelfl S."/>
            <person name="Harris D.E."/>
            <person name="Bowman S."/>
            <person name="Brown D."/>
            <person name="Churcher C.M."/>
            <person name="Connor R."/>
            <person name="Dedman K."/>
            <person name="Gentles S."/>
            <person name="Hamlin N."/>
            <person name="Hunt S."/>
            <person name="Jones L."/>
            <person name="McDonald S."/>
            <person name="Murphy L.D."/>
            <person name="Niblett D."/>
            <person name="Odell C."/>
            <person name="Oliver K."/>
            <person name="Rajandream M.A."/>
            <person name="Richards C."/>
            <person name="Shore L."/>
            <person name="Walsh S.V."/>
            <person name="Barrell B.G."/>
            <person name="Dietrich F.S."/>
            <person name="Mulligan J.T."/>
            <person name="Allen E."/>
            <person name="Araujo R."/>
            <person name="Aviles E."/>
            <person name="Berno A."/>
            <person name="Carpenter J."/>
            <person name="Chen E."/>
            <person name="Cherry J.M."/>
            <person name="Chung E."/>
            <person name="Duncan M."/>
            <person name="Hunicke-Smith S."/>
            <person name="Hyman R.W."/>
            <person name="Komp C."/>
            <person name="Lashkari D."/>
            <person name="Lew H."/>
            <person name="Lin D."/>
            <person name="Mosedale D."/>
            <person name="Nakahara K."/>
            <person name="Namath A."/>
            <person name="Oefner P."/>
            <person name="Oh C."/>
            <person name="Petel F.X."/>
            <person name="Roberts D."/>
            <person name="Schramm S."/>
            <person name="Schroeder M."/>
            <person name="Shogren T."/>
            <person name="Shroff N."/>
            <person name="Winant A."/>
            <person name="Yelton M.A."/>
            <person name="Botstein D."/>
            <person name="Davis R.W."/>
            <person name="Johnston M."/>
            <person name="Andrews S."/>
            <person name="Brinkman R."/>
            <person name="Cooper J."/>
            <person name="Ding H."/>
            <person name="Du Z."/>
            <person name="Favello A."/>
            <person name="Fulton L."/>
            <person name="Gattung S."/>
            <person name="Greco T."/>
            <person name="Hallsworth K."/>
            <person name="Hawkins J."/>
            <person name="Hillier L.W."/>
            <person name="Jier M."/>
            <person name="Johnson D."/>
            <person name="Johnston L."/>
            <person name="Kirsten J."/>
            <person name="Kucaba T."/>
            <person name="Langston Y."/>
            <person name="Latreille P."/>
            <person name="Le T."/>
            <person name="Mardis E."/>
            <person name="Menezes S."/>
            <person name="Miller N."/>
            <person name="Nhan M."/>
            <person name="Pauley A."/>
            <person name="Peluso D."/>
            <person name="Rifkin L."/>
            <person name="Riles L."/>
            <person name="Taich A."/>
            <person name="Trevaskis E."/>
            <person name="Vignati D."/>
            <person name="Wilcox L."/>
            <person name="Wohldman P."/>
            <person name="Vaudin M."/>
            <person name="Wilson R."/>
            <person name="Waterston R."/>
            <person name="Albermann K."/>
            <person name="Hani J."/>
            <person name="Heumann K."/>
            <person name="Kleine K."/>
            <person name="Mewes H.-W."/>
            <person name="Zollner A."/>
            <person name="Zaccaria P."/>
        </authorList>
    </citation>
    <scope>NUCLEOTIDE SEQUENCE [LARGE SCALE GENOMIC DNA] (EFT2)</scope>
    <source>
        <strain>ATCC 204508 / S288c</strain>
    </source>
</reference>
<reference key="5">
    <citation type="journal article" date="1997" name="Nature">
        <title>The nucleotide sequence of Saccharomyces cerevisiae chromosome XV.</title>
        <authorList>
            <person name="Dujon B."/>
            <person name="Albermann K."/>
            <person name="Aldea M."/>
            <person name="Alexandraki D."/>
            <person name="Ansorge W."/>
            <person name="Arino J."/>
            <person name="Benes V."/>
            <person name="Bohn C."/>
            <person name="Bolotin-Fukuhara M."/>
            <person name="Bordonne R."/>
            <person name="Boyer J."/>
            <person name="Camasses A."/>
            <person name="Casamayor A."/>
            <person name="Casas C."/>
            <person name="Cheret G."/>
            <person name="Cziepluch C."/>
            <person name="Daignan-Fornier B."/>
            <person name="Dang V.-D."/>
            <person name="de Haan M."/>
            <person name="Delius H."/>
            <person name="Durand P."/>
            <person name="Fairhead C."/>
            <person name="Feldmann H."/>
            <person name="Gaillon L."/>
            <person name="Galisson F."/>
            <person name="Gamo F.-J."/>
            <person name="Gancedo C."/>
            <person name="Goffeau A."/>
            <person name="Goulding S.E."/>
            <person name="Grivell L.A."/>
            <person name="Habbig B."/>
            <person name="Hand N.J."/>
            <person name="Hani J."/>
            <person name="Hattenhorst U."/>
            <person name="Hebling U."/>
            <person name="Hernando Y."/>
            <person name="Herrero E."/>
            <person name="Heumann K."/>
            <person name="Hiesel R."/>
            <person name="Hilger F."/>
            <person name="Hofmann B."/>
            <person name="Hollenberg C.P."/>
            <person name="Hughes B."/>
            <person name="Jauniaux J.-C."/>
            <person name="Kalogeropoulos A."/>
            <person name="Katsoulou C."/>
            <person name="Kordes E."/>
            <person name="Lafuente M.J."/>
            <person name="Landt O."/>
            <person name="Louis E.J."/>
            <person name="Maarse A.C."/>
            <person name="Madania A."/>
            <person name="Mannhaupt G."/>
            <person name="Marck C."/>
            <person name="Martin R.P."/>
            <person name="Mewes H.-W."/>
            <person name="Michaux G."/>
            <person name="Paces V."/>
            <person name="Parle-McDermott A.G."/>
            <person name="Pearson B.M."/>
            <person name="Perrin A."/>
            <person name="Pettersson B."/>
            <person name="Poch O."/>
            <person name="Pohl T.M."/>
            <person name="Poirey R."/>
            <person name="Portetelle D."/>
            <person name="Pujol A."/>
            <person name="Purnelle B."/>
            <person name="Ramezani Rad M."/>
            <person name="Rechmann S."/>
            <person name="Schwager C."/>
            <person name="Schweizer M."/>
            <person name="Sor F."/>
            <person name="Sterky F."/>
            <person name="Tarassov I.A."/>
            <person name="Teodoru C."/>
            <person name="Tettelin H."/>
            <person name="Thierry A."/>
            <person name="Tobiasch E."/>
            <person name="Tzermia M."/>
            <person name="Uhlen M."/>
            <person name="Unseld M."/>
            <person name="Valens M."/>
            <person name="Vandenbol M."/>
            <person name="Vetter I."/>
            <person name="Vlcek C."/>
            <person name="Voet M."/>
            <person name="Volckaert G."/>
            <person name="Voss H."/>
            <person name="Wambutt R."/>
            <person name="Wedler H."/>
            <person name="Wiemann S."/>
            <person name="Winsor B."/>
            <person name="Wolfe K.H."/>
            <person name="Zollner A."/>
            <person name="Zumstein E."/>
            <person name="Kleine K."/>
        </authorList>
    </citation>
    <scope>NUCLEOTIDE SEQUENCE [LARGE SCALE GENOMIC DNA] (EFT1)</scope>
    <source>
        <strain>ATCC 204508 / S288c</strain>
    </source>
</reference>
<reference key="6">
    <citation type="journal article" date="2014" name="G3 (Bethesda)">
        <title>The reference genome sequence of Saccharomyces cerevisiae: Then and now.</title>
        <authorList>
            <person name="Engel S.R."/>
            <person name="Dietrich F.S."/>
            <person name="Fisk D.G."/>
            <person name="Binkley G."/>
            <person name="Balakrishnan R."/>
            <person name="Costanzo M.C."/>
            <person name="Dwight S.S."/>
            <person name="Hitz B.C."/>
            <person name="Karra K."/>
            <person name="Nash R.S."/>
            <person name="Weng S."/>
            <person name="Wong E.D."/>
            <person name="Lloyd P."/>
            <person name="Skrzypek M.S."/>
            <person name="Miyasato S.R."/>
            <person name="Simison M."/>
            <person name="Cherry J.M."/>
        </authorList>
    </citation>
    <scope>GENOME REANNOTATION (EFT1 AND EFT2)</scope>
    <source>
        <strain>ATCC 204508 / S288c</strain>
    </source>
</reference>
<reference key="7">
    <citation type="journal article" date="1994" name="Electrophoresis">
        <title>Protein identifications for a Saccharomyces cerevisiae protein database.</title>
        <authorList>
            <person name="Garrels J.I."/>
            <person name="Futcher B."/>
            <person name="Kobayashi R."/>
            <person name="Latter G.I."/>
            <person name="Schwender B."/>
            <person name="Volpe T."/>
            <person name="Warner J.R."/>
            <person name="McLaughlin C.S."/>
        </authorList>
    </citation>
    <scope>PROTEIN SEQUENCE OF 411-422 AND 505-513</scope>
    <source>
        <strain>ATCC 204508 / S288c</strain>
    </source>
</reference>
<reference key="8">
    <citation type="journal article" date="2004" name="J. Clin. Microbiol.">
        <title>Phylogeny and evolution of medical species of Candida and related taxa: a multigenic analysis.</title>
        <authorList>
            <person name="Diezmann S."/>
            <person name="Cox C.J."/>
            <person name="Schoenian G."/>
            <person name="Vilgalys R.J."/>
            <person name="Mitchell T.G."/>
        </authorList>
    </citation>
    <scope>NUCLEOTIDE SEQUENCE [GENOMIC DNA] OF 586-785</scope>
</reference>
<reference key="9">
    <citation type="journal article" date="1978" name="J. Biol. Chem.">
        <title>Isolation and properties of the trypsin-derived ADP-ribosyl peptide from diphtheria toxin-modified yeast elongation factor 2.</title>
        <authorList>
            <person name="Van Ness B.G."/>
            <person name="Howard J.B."/>
            <person name="Bodley J.W."/>
        </authorList>
    </citation>
    <scope>PROTEIN SEQUENCE OF 686-700</scope>
    <scope>DIPHTHAMIDE AT HIS-699</scope>
</reference>
<reference key="10">
    <citation type="journal article" date="1991" name="FEBS Lett.">
        <title>Saccharomyces cerevisiae elongation factor 2 is phosphorylated by an endogenous kinase.</title>
        <authorList>
            <person name="Donovan M.G."/>
            <person name="Bodley J.W."/>
        </authorList>
    </citation>
    <scope>PHOSPHORYLATION</scope>
</reference>
<reference key="11">
    <citation type="journal article" date="1993" name="Biochem. Biophys. Res. Commun.">
        <title>Expression of non-ADP-ribosylatable, diphtheria toxin-resistant elongation factor 2 in Saccharomyces cerevisiae.</title>
        <authorList>
            <person name="Kimata Y."/>
            <person name="Harashima S."/>
            <person name="Kohno K."/>
        </authorList>
    </citation>
    <scope>MUTAGENESIS OF GLY-701</scope>
</reference>
<reference key="12">
    <citation type="journal article" date="1993" name="J. Biol. Chem.">
        <title>Saccharomyces cerevisiae elongation factor 2. Mutagenesis of the histidine precursor of diphthamide yields a functional protein that is resistant to diphtheria toxin.</title>
        <authorList>
            <person name="Phan L.D."/>
            <person name="Perentesis J.P."/>
            <person name="Bodley J.W."/>
        </authorList>
    </citation>
    <scope>MUTAGENESIS OF HIS-699</scope>
</reference>
<reference key="13">
    <citation type="journal article" date="1998" name="J. Biol. Chem.">
        <title>Elongation factor 2 as a novel target for selective inhibition of fungal protein synthesis.</title>
        <authorList>
            <person name="Justice M.C."/>
            <person name="Hsu M.-J."/>
            <person name="Tse B."/>
            <person name="Ku T."/>
            <person name="Balkovec J."/>
            <person name="Schmatz D."/>
            <person name="Nielsen J."/>
        </authorList>
    </citation>
    <scope>ACTIVITY REGULATION</scope>
    <scope>MUTAGENESIS OF ARG-180; VAL-187; GLN-490; TYR-521; SER-523; ILE-529; PRO-559; ALA-562; PRO-727; VAL-774 AND GLY-790</scope>
</reference>
<reference key="14">
    <citation type="journal article" date="2002" name="Mol. Microbiol.">
        <title>Characterization of interaction sites in the Saccharomyces cerevisiae ribosomal stalk components.</title>
        <authorList>
            <person name="Lalioti V.S."/>
            <person name="Perez-Fernandez J."/>
            <person name="Remacha M.A."/>
            <person name="Ballesta J.P.G."/>
        </authorList>
    </citation>
    <scope>INTERACTION WITH RPL0</scope>
</reference>
<reference key="15">
    <citation type="journal article" date="2003" name="Nature">
        <title>Global analysis of protein localization in budding yeast.</title>
        <authorList>
            <person name="Huh W.-K."/>
            <person name="Falvo J.V."/>
            <person name="Gerke L.C."/>
            <person name="Carroll A.S."/>
            <person name="Howson R.W."/>
            <person name="Weissman J.S."/>
            <person name="O'Shea E.K."/>
        </authorList>
    </citation>
    <scope>SUBCELLULAR LOCATION [LARGE SCALE ANALYSIS]</scope>
</reference>
<reference key="16">
    <citation type="journal article" date="2003" name="Nature">
        <title>Global analysis of protein expression in yeast.</title>
        <authorList>
            <person name="Ghaemmaghami S."/>
            <person name="Huh W.-K."/>
            <person name="Bower K."/>
            <person name="Howson R.W."/>
            <person name="Belle A."/>
            <person name="Dephoure N."/>
            <person name="O'Shea E.K."/>
            <person name="Weissman J.S."/>
        </authorList>
    </citation>
    <scope>LEVEL OF PROTEIN EXPRESSION [LARGE SCALE ANALYSIS]</scope>
</reference>
<reference key="17">
    <citation type="journal article" date="2006" name="J. Biol. Chem.">
        <title>Translation elongation factor 2 anticodon mimicry domain mutants affect fidelity and diphtheria toxin resistance.</title>
        <authorList>
            <person name="Ortiz P.A."/>
            <person name="Ulloque R."/>
            <person name="Kihara G.K."/>
            <person name="Zheng H."/>
            <person name="Kinzy T.G."/>
        </authorList>
    </citation>
    <scope>FUNCTION</scope>
    <scope>CATALYTIC ACTIVITY</scope>
    <scope>DIPHTHAMIDE AT HIS-699</scope>
    <scope>MUTAGENESIS OF HIS-694; ASP-696; ILE-698 AND HIS-699</scope>
</reference>
<reference key="18">
    <citation type="journal article" date="2008" name="Mol. Cell. Proteomics">
        <title>A multidimensional chromatography technology for in-depth phosphoproteome analysis.</title>
        <authorList>
            <person name="Albuquerque C.P."/>
            <person name="Smolka M.B."/>
            <person name="Payne S.H."/>
            <person name="Bafna V."/>
            <person name="Eng J."/>
            <person name="Zhou H."/>
        </authorList>
    </citation>
    <scope>IDENTIFICATION BY MASS SPECTROMETRY [LARGE SCALE ANALYSIS]</scope>
</reference>
<reference key="19">
    <citation type="journal article" date="2008" name="Mol. Microbiol.">
        <title>A versatile partner of eukaryotic protein complexes that is involved in multiple biological processes: Kti11/Dph3.</title>
        <authorList>
            <person name="Baer C."/>
            <person name="Zabel R."/>
            <person name="Liu S."/>
            <person name="Stark M.J."/>
            <person name="Schaffrath R."/>
        </authorList>
    </citation>
    <scope>MUTAGENESIS OF HIS-699</scope>
</reference>
<reference key="20">
    <citation type="journal article" date="2009" name="Science">
        <title>Global analysis of Cdk1 substrate phosphorylation sites provides insights into evolution.</title>
        <authorList>
            <person name="Holt L.J."/>
            <person name="Tuch B.B."/>
            <person name="Villen J."/>
            <person name="Johnson A.D."/>
            <person name="Gygi S.P."/>
            <person name="Morgan D.O."/>
        </authorList>
    </citation>
    <scope>PHOSPHORYLATION [LARGE SCALE ANALYSIS] AT SER-579; THR-713 AND THR-763</scope>
    <scope>IDENTIFICATION BY MASS SPECTROMETRY [LARGE SCALE ANALYSIS]</scope>
</reference>
<reference key="21">
    <citation type="journal article" date="2012" name="Hum. Mol. Genet.">
        <title>A conserved eEF2 coding variant in SCA26 leads to loss of translational fidelity and increased susceptibility to proteostatic insult.</title>
        <authorList>
            <person name="Hekman K.E."/>
            <person name="Yu G.Y."/>
            <person name="Brown C.D."/>
            <person name="Zhu H."/>
            <person name="Du X."/>
            <person name="Gervin K."/>
            <person name="Undlien D.E."/>
            <person name="Peterson A."/>
            <person name="Stevanin G."/>
            <person name="Clark H.B."/>
            <person name="Pulst S.M."/>
            <person name="Bird T.D."/>
            <person name="White K.P."/>
            <person name="Gomez C.M."/>
        </authorList>
    </citation>
    <scope>MUTAGENESIS OF PRO-580</scope>
</reference>
<reference key="22">
    <citation type="journal article" date="2012" name="Proc. Natl. Acad. Sci. U.S.A.">
        <title>N-terminal acetylome analyses and functional insights of the N-terminal acetyltransferase NatB.</title>
        <authorList>
            <person name="Van Damme P."/>
            <person name="Lasa M."/>
            <person name="Polevoda B."/>
            <person name="Gazquez C."/>
            <person name="Elosegui-Artola A."/>
            <person name="Kim D.S."/>
            <person name="De Juan-Pardo E."/>
            <person name="Demeyer K."/>
            <person name="Hole K."/>
            <person name="Larrea E."/>
            <person name="Timmerman E."/>
            <person name="Prieto J."/>
            <person name="Arnesen T."/>
            <person name="Sherman F."/>
            <person name="Gevaert K."/>
            <person name="Aldabe R."/>
        </authorList>
    </citation>
    <scope>IDENTIFICATION BY MASS SPECTROMETRY [LARGE SCALE ANALYSIS]</scope>
</reference>
<reference key="23">
    <citation type="journal article" date="2012" name="Proteomics">
        <title>Sites of ubiquitin attachment in Saccharomyces cerevisiae.</title>
        <authorList>
            <person name="Starita L.M."/>
            <person name="Lo R.S."/>
            <person name="Eng J.K."/>
            <person name="von Haller P.D."/>
            <person name="Fields S."/>
        </authorList>
    </citation>
    <scope>UBIQUITINATION [LARGE SCALE ANALYSIS] AT LYS-841</scope>
    <scope>IDENTIFICATION BY MASS SPECTROMETRY [LARGE SCALE ANALYSIS]</scope>
</reference>
<reference key="24">
    <citation type="journal article" date="2012" name="Proteomics">
        <title>Methylation of translation-associated proteins in Saccharomyces cerevisiae: Identification of methylated lysines and their methyltransferases.</title>
        <authorList>
            <person name="Couttas T.A."/>
            <person name="Raftery M.J."/>
            <person name="Padula M.P."/>
            <person name="Herbert B.R."/>
            <person name="Wilkins M.R."/>
        </authorList>
    </citation>
    <scope>METHYLATION AT LYS-509</scope>
</reference>
<reference key="25">
    <citation type="journal article" date="2014" name="Biochem. Biophys. Res. Commun.">
        <title>Elongation factor methyltransferase 3 - A novel eukaryotic lysine methyltransferase.</title>
        <authorList>
            <person name="Zhang L."/>
            <person name="Hamey J.J."/>
            <person name="Hart-Smith G."/>
            <person name="Erce M.A."/>
            <person name="Wilkins M.R."/>
        </authorList>
    </citation>
    <scope>METHYLATION AT LYS-509 BY EFM3</scope>
    <scope>METHYLATION AT LYS-613 BY EFM2</scope>
</reference>
<reference key="26">
    <citation type="journal article" date="2014" name="J. Proteome Res.">
        <title>Stoichiometry of Saccharomyces cerevisiae lysine methylation: insights into non-histone protein lysine methyltransferase activity.</title>
        <authorList>
            <person name="Hart-Smith G."/>
            <person name="Chia S.Z."/>
            <person name="Low J.K."/>
            <person name="McKay M.J."/>
            <person name="Molloy M.P."/>
            <person name="Wilkins M.R."/>
        </authorList>
    </citation>
    <scope>METHYLATION AT LYS-509</scope>
    <scope>METHYLATION AT LYS-613 BY EFM2</scope>
</reference>
<reference key="27">
    <citation type="journal article" date="2016" name="PLoS ONE">
        <title>Evidence for a negative cooperativity between eIF5A and eEF2 on binding to the ribosome.</title>
        <authorList>
            <person name="Rossi D."/>
            <person name="Barbosa N.M."/>
            <person name="Galvao F.C."/>
            <person name="Boldrin P.E."/>
            <person name="Hershey J.W."/>
            <person name="Zanelli C.F."/>
            <person name="Fraser C.S."/>
            <person name="Valentini S.R."/>
        </authorList>
    </citation>
    <scope>RIBOSOME-BINDING</scope>
</reference>
<reference key="28">
    <citation type="journal article" date="2018" name="J. Biochem.">
        <title>Tight interaction of eEF2 in the presence of Stm1 on ribosome.</title>
        <authorList>
            <person name="Hayashi H."/>
            <person name="Nagai R."/>
            <person name="Abe T."/>
            <person name="Wada M."/>
            <person name="Ito K."/>
            <person name="Takeuchi-Tomita N."/>
        </authorList>
    </citation>
    <scope>FUNCTION</scope>
    <scope>CATALYTIC ACTIVITY</scope>
    <scope>INTERACTION WITH STM1</scope>
    <scope>MUTAGENESIS OF HIS-699</scope>
</reference>
<reference evidence="24 25" key="29">
    <citation type="journal article" date="2003" name="Nat. Struct. Biol.">
        <title>Two crystal structures demonstrate large conformational changes in the eukaryotic ribosomal translocase.</title>
        <authorList>
            <person name="Joergensen R."/>
            <person name="Ortiz P.A."/>
            <person name="Carr-Schmid A."/>
            <person name="Nissen P."/>
            <person name="Kinzy T.G."/>
            <person name="Andersen G.R."/>
        </authorList>
    </citation>
    <scope>X-RAY CRYSTALLOGRAPHY (2.12 ANGSTROMS) IN COMPLEX WITH SORDARIN</scope>
    <scope>ACTIVITY REGULATION</scope>
    <scope>RIBOSOME-BINDING</scope>
</reference>
<reference evidence="29" key="30">
    <citation type="journal article" date="2004" name="EMBO J.">
        <title>Domain movements of elongation factor eEF2 and the eukaryotic 80S ribosome facilitate tRNA translocation.</title>
        <authorList>
            <person name="Spahn C.M.T."/>
            <person name="Gomez-Lorenzo M.G."/>
            <person name="Grassucci R.A."/>
            <person name="Joergensen R."/>
            <person name="Andersen G.R."/>
            <person name="Beckmann R."/>
            <person name="Penczek P.A."/>
            <person name="Ballesta J.P.G."/>
            <person name="Frank J."/>
        </authorList>
    </citation>
    <scope>STRUCTURE BY ELECTRON MICROSCOPY (11.7 ANGSTROMS) IN COMPLEX WITH 80S RIBOSOME AND SORDARIN</scope>
    <scope>FUNCTION</scope>
    <scope>ACTIVITY REGULATION</scope>
    <scope>INTERACTION WITH RPL9A; RPL12A; RPS23A; 18S RRNA AND 25S RRNA</scope>
    <scope>RIBOSOME-BINDING</scope>
</reference>
<reference evidence="26" key="31">
    <citation type="journal article" date="2004" name="J. Biol. Chem.">
        <title>Crystal structure of ADP-ribosylated ribosomal translocase from Saccharomyces cerevisiae.</title>
        <authorList>
            <person name="Joergensen R."/>
            <person name="Yates S.P."/>
            <person name="Teal D.J."/>
            <person name="Nilsson J."/>
            <person name="Prentice G.A."/>
            <person name="Merrill A.R."/>
            <person name="Andersen G.R."/>
        </authorList>
    </citation>
    <scope>X-RAY CRYSTALLOGRAPHY (2.6 ANGSTROMS) OF ADP-RIBOSYLATED FORM IN COMPLEX WITH GDP AND SORDARIN</scope>
    <scope>RIBOSOME-BINDING</scope>
    <scope>DIPHTHAMIDE AT HIS-699</scope>
</reference>
<reference evidence="27 28" key="32">
    <citation type="journal article" date="2007" name="J. Biol. Chem.">
        <title>Sordarin derivatives induce a novel conformation of the yeast ribosome translocation factor eEF2.</title>
        <authorList>
            <person name="Soee R."/>
            <person name="Mosley R.T."/>
            <person name="Justice M."/>
            <person name="Nielsen-Kahn J."/>
            <person name="Shastry M."/>
            <person name="Merrill A.R."/>
            <person name="Andersen G.R."/>
        </authorList>
    </citation>
    <scope>X-RAY CRYSTALLOGRAPHY (2.90 ANGSTROMS) IN COMPLEX WITH GDP</scope>
    <scope>FUNCTION</scope>
    <scope>ACTIVITY REGULATION</scope>
</reference>
<name>EF2_YEAST</name>
<feature type="chain" id="PRO_0000091024" description="Elongation factor 2">
    <location>
        <begin position="1"/>
        <end position="842"/>
    </location>
</feature>
<feature type="domain" description="tr-type G" evidence="1">
    <location>
        <begin position="17"/>
        <end position="346"/>
    </location>
</feature>
<feature type="binding site" evidence="22 23 26 28">
    <location>
        <begin position="26"/>
        <end position="33"/>
    </location>
    <ligand>
        <name>GTP</name>
        <dbReference type="ChEBI" id="CHEBI:37565"/>
    </ligand>
</feature>
<feature type="binding site" evidence="22 23 26 27 28">
    <location>
        <begin position="158"/>
        <end position="161"/>
    </location>
    <ligand>
        <name>GTP</name>
        <dbReference type="ChEBI" id="CHEBI:37565"/>
    </ligand>
</feature>
<feature type="binding site" evidence="22 23 26 27 28">
    <location>
        <begin position="213"/>
        <end position="215"/>
    </location>
    <ligand>
        <name>GTP</name>
        <dbReference type="ChEBI" id="CHEBI:37565"/>
    </ligand>
</feature>
<feature type="modified residue" description="N6,N6,N6-trimethyllysine; by EFM3; alternate" evidence="13 14">
    <location>
        <position position="509"/>
    </location>
</feature>
<feature type="modified residue" description="N6,N6-dimethyllysine; by EFM3; alternate" evidence="11 13 14">
    <location>
        <position position="509"/>
    </location>
</feature>
<feature type="modified residue" description="N6-methyllysine; by EFM3; alternate" evidence="13 14">
    <location>
        <position position="509"/>
    </location>
</feature>
<feature type="modified residue" description="Phosphoserine" evidence="30">
    <location>
        <position position="579"/>
    </location>
</feature>
<feature type="modified residue" description="N6,N6-dimethyllysine; by EFM2; alternate" evidence="13 14">
    <location>
        <position position="613"/>
    </location>
</feature>
<feature type="modified residue" description="N6-methyllysine; by EFM2; alternate" evidence="13 14">
    <location>
        <position position="613"/>
    </location>
</feature>
<feature type="modified residue" description="Diphthamide" evidence="7 8 17">
    <location>
        <position position="699"/>
    </location>
</feature>
<feature type="modified residue" description="Phosphothreonine" evidence="30">
    <location>
        <position position="713"/>
    </location>
</feature>
<feature type="modified residue" description="Phosphothreonine" evidence="30">
    <location>
        <position position="763"/>
    </location>
</feature>
<feature type="cross-link" description="Glycyl lysine isopeptide (Lys-Gly) (interchain with G-Cter in ubiquitin)" evidence="31">
    <location>
        <position position="841"/>
    </location>
</feature>
<feature type="mutagenesis site" description="Causes resistance to fusidic acid and reduces sensitivity to sordarin." evidence="20">
    <original>R</original>
    <variation>G</variation>
    <location>
        <position position="180"/>
    </location>
</feature>
<feature type="mutagenesis site" description="Causes resistance to fusidic acid and reduces sensitivity to sordarin." evidence="20">
    <original>V</original>
    <variation>F</variation>
    <location>
        <position position="187"/>
    </location>
</feature>
<feature type="mutagenesis site" description="Reduces sensitivity to sordarin." evidence="20">
    <original>Q</original>
    <variation>E</variation>
    <location>
        <position position="490"/>
    </location>
</feature>
<feature type="mutagenesis site" description="Reduces sensitivity to fusidic acid and sordarin." evidence="20">
    <original>Y</original>
    <variation>D</variation>
    <variation>N</variation>
    <variation>S</variation>
    <location>
        <position position="521"/>
    </location>
</feature>
<feature type="mutagenesis site" description="Causes resistance to fusidic acid and sordarin." evidence="20">
    <original>S</original>
    <variation>F</variation>
    <variation>P</variation>
    <location>
        <position position="523"/>
    </location>
</feature>
<feature type="mutagenesis site" description="Reduces sensitivity to sordarin." evidence="20">
    <original>I</original>
    <variation>T</variation>
    <location>
        <position position="529"/>
    </location>
</feature>
<feature type="mutagenesis site" description="Causes resistance to fusidic acid and sordarin." evidence="20">
    <original>P</original>
    <variation>L</variation>
    <variation>R</variation>
    <location>
        <position position="559"/>
    </location>
</feature>
<feature type="mutagenesis site" description="Reduces sensitivity to fusidic acid and causes resistance to sordarin." evidence="20">
    <original>A</original>
    <variation>P</variation>
    <location>
        <position position="562"/>
    </location>
</feature>
<feature type="mutagenesis site" description="Causes impaired ribosomal translocation with an increased rate of -1 programmed ribosomal frameshift read-through during translation." evidence="12">
    <original>P</original>
    <variation>H</variation>
    <location>
        <position position="580"/>
    </location>
</feature>
<feature type="mutagenesis site" description="Abolished ability to promote translation elongation." evidence="8">
    <original>H</original>
    <variation>A</variation>
    <location>
        <position position="694"/>
    </location>
</feature>
<feature type="mutagenesis site" description="Leads to conditional growth defects, sensitivity to translation inhibitors, and decreased translation." evidence="8">
    <original>D</original>
    <variation>A</variation>
    <location>
        <position position="696"/>
    </location>
</feature>
<feature type="mutagenesis site" description="Leads to conditional growth defects, sensitivity to translation inhibitors, and decreased translation." evidence="8">
    <original>I</original>
    <variation>A</variation>
    <location>
        <position position="698"/>
    </location>
</feature>
<feature type="mutagenesis site" description="Prevents post-translational modification of this residue to diphthamide. Results in a functional protein that is resistant to diphtheria toxin and sordarin." evidence="10 19">
    <original>H</original>
    <variation>D</variation>
    <variation>E</variation>
    <variation>L</variation>
    <variation>M</variation>
    <variation>I</variation>
    <location>
        <position position="699"/>
    </location>
</feature>
<feature type="mutagenesis site" description="Leads to conditional growth defects, sensitivity to translation inhibitors, and decreased translation." evidence="8 16">
    <original>H</original>
    <variation>N</variation>
    <location>
        <position position="699"/>
    </location>
</feature>
<feature type="mutagenesis site" description="Prevents ADP-ribosylation of the diphthamide by diphtheria toxin." evidence="18">
    <original>G</original>
    <variation>R</variation>
    <location>
        <position position="701"/>
    </location>
</feature>
<feature type="mutagenesis site" description="Causes resistance to sordarin." evidence="20">
    <original>P</original>
    <variation>S</variation>
    <location>
        <position position="727"/>
    </location>
</feature>
<feature type="mutagenesis site" description="Causes resistance to sordarin." evidence="20">
    <original>V</original>
    <variation>F</variation>
    <location>
        <position position="774"/>
    </location>
</feature>
<feature type="mutagenesis site" description="Causes resistance to fusidic acid and sordarin." evidence="20">
    <location>
        <position position="790"/>
    </location>
</feature>
<feature type="strand" evidence="35">
    <location>
        <begin position="2"/>
        <end position="4"/>
    </location>
</feature>
<feature type="helix" evidence="32">
    <location>
        <begin position="6"/>
        <end position="14"/>
    </location>
</feature>
<feature type="helix" evidence="32">
    <location>
        <begin position="16"/>
        <end position="18"/>
    </location>
</feature>
<feature type="strand" evidence="32">
    <location>
        <begin position="19"/>
        <end position="25"/>
    </location>
</feature>
<feature type="helix" evidence="32">
    <location>
        <begin position="28"/>
        <end position="30"/>
    </location>
</feature>
<feature type="helix" evidence="32">
    <location>
        <begin position="32"/>
        <end position="43"/>
    </location>
</feature>
<feature type="strand" evidence="35">
    <location>
        <begin position="44"/>
        <end position="48"/>
    </location>
</feature>
<feature type="strand" evidence="32">
    <location>
        <begin position="74"/>
        <end position="80"/>
    </location>
</feature>
<feature type="helix" evidence="32">
    <location>
        <begin position="83"/>
        <end position="88"/>
    </location>
</feature>
<feature type="strand" evidence="32">
    <location>
        <begin position="95"/>
        <end position="103"/>
    </location>
</feature>
<feature type="helix" evidence="34">
    <location>
        <begin position="109"/>
        <end position="111"/>
    </location>
</feature>
<feature type="helix" evidence="32">
    <location>
        <begin position="113"/>
        <end position="120"/>
    </location>
</feature>
<feature type="strand" evidence="32">
    <location>
        <begin position="123"/>
        <end position="130"/>
    </location>
</feature>
<feature type="turn" evidence="32">
    <location>
        <begin position="131"/>
        <end position="133"/>
    </location>
</feature>
<feature type="helix" evidence="32">
    <location>
        <begin position="137"/>
        <end position="148"/>
    </location>
</feature>
<feature type="strand" evidence="32">
    <location>
        <begin position="152"/>
        <end position="158"/>
    </location>
</feature>
<feature type="helix" evidence="32">
    <location>
        <begin position="160"/>
        <end position="165"/>
    </location>
</feature>
<feature type="helix" evidence="32">
    <location>
        <begin position="171"/>
        <end position="192"/>
    </location>
</feature>
<feature type="helix" evidence="32">
    <location>
        <begin position="195"/>
        <end position="197"/>
    </location>
</feature>
<feature type="helix" evidence="32">
    <location>
        <begin position="204"/>
        <end position="206"/>
    </location>
</feature>
<feature type="strand" evidence="32">
    <location>
        <begin position="209"/>
        <end position="213"/>
    </location>
</feature>
<feature type="turn" evidence="32">
    <location>
        <begin position="214"/>
        <end position="217"/>
    </location>
</feature>
<feature type="strand" evidence="32">
    <location>
        <begin position="218"/>
        <end position="221"/>
    </location>
</feature>
<feature type="helix" evidence="32">
    <location>
        <begin position="222"/>
        <end position="230"/>
    </location>
</feature>
<feature type="turn" evidence="32">
    <location>
        <begin position="231"/>
        <end position="234"/>
    </location>
</feature>
<feature type="helix" evidence="32">
    <location>
        <begin position="237"/>
        <end position="243"/>
    </location>
</feature>
<feature type="strand" evidence="32">
    <location>
        <begin position="245"/>
        <end position="247"/>
    </location>
</feature>
<feature type="strand" evidence="32">
    <location>
        <begin position="249"/>
        <end position="251"/>
    </location>
</feature>
<feature type="turn" evidence="32">
    <location>
        <begin position="252"/>
        <end position="255"/>
    </location>
</feature>
<feature type="strand" evidence="32">
    <location>
        <begin position="256"/>
        <end position="259"/>
    </location>
</feature>
<feature type="strand" evidence="33">
    <location>
        <begin position="261"/>
        <end position="263"/>
    </location>
</feature>
<feature type="turn" evidence="33">
    <location>
        <begin position="264"/>
        <end position="266"/>
    </location>
</feature>
<feature type="helix" evidence="32">
    <location>
        <begin position="272"/>
        <end position="276"/>
    </location>
</feature>
<feature type="helix" evidence="32">
    <location>
        <begin position="278"/>
        <end position="289"/>
    </location>
</feature>
<feature type="helix" evidence="32">
    <location>
        <begin position="295"/>
        <end position="302"/>
    </location>
</feature>
<feature type="helix" evidence="32">
    <location>
        <begin position="309"/>
        <end position="313"/>
    </location>
</feature>
<feature type="helix" evidence="32">
    <location>
        <begin position="316"/>
        <end position="327"/>
    </location>
</feature>
<feature type="helix" evidence="32">
    <location>
        <begin position="330"/>
        <end position="341"/>
    </location>
</feature>
<feature type="helix" evidence="32">
    <location>
        <begin position="345"/>
        <end position="356"/>
    </location>
</feature>
<feature type="strand" evidence="32">
    <location>
        <begin position="357"/>
        <end position="359"/>
    </location>
</feature>
<feature type="helix" evidence="32">
    <location>
        <begin position="364"/>
        <end position="370"/>
    </location>
</feature>
<feature type="strand" evidence="37">
    <location>
        <begin position="374"/>
        <end position="377"/>
    </location>
</feature>
<feature type="strand" evidence="32">
    <location>
        <begin position="379"/>
        <end position="390"/>
    </location>
</feature>
<feature type="strand" evidence="32">
    <location>
        <begin position="394"/>
        <end position="406"/>
    </location>
</feature>
<feature type="strand" evidence="32">
    <location>
        <begin position="410"/>
        <end position="414"/>
    </location>
</feature>
<feature type="strand" evidence="32">
    <location>
        <begin position="420"/>
        <end position="422"/>
    </location>
</feature>
<feature type="strand" evidence="32">
    <location>
        <begin position="426"/>
        <end position="430"/>
    </location>
</feature>
<feature type="strand" evidence="32">
    <location>
        <begin position="433"/>
        <end position="438"/>
    </location>
</feature>
<feature type="strand" evidence="32">
    <location>
        <begin position="441"/>
        <end position="449"/>
    </location>
</feature>
<feature type="strand" evidence="32">
    <location>
        <begin position="453"/>
        <end position="458"/>
    </location>
</feature>
<feature type="turn" evidence="32">
    <location>
        <begin position="460"/>
        <end position="462"/>
    </location>
</feature>
<feature type="strand" evidence="32">
    <location>
        <begin position="465"/>
        <end position="471"/>
    </location>
</feature>
<feature type="strand" evidence="32">
    <location>
        <begin position="489"/>
        <end position="497"/>
    </location>
</feature>
<feature type="helix" evidence="32">
    <location>
        <begin position="498"/>
        <end position="500"/>
    </location>
</feature>
<feature type="helix" evidence="32">
    <location>
        <begin position="501"/>
        <end position="514"/>
    </location>
</feature>
<feature type="strand" evidence="32">
    <location>
        <begin position="519"/>
        <end position="522"/>
    </location>
</feature>
<feature type="strand" evidence="32">
    <location>
        <begin position="528"/>
        <end position="534"/>
    </location>
</feature>
<feature type="helix" evidence="32">
    <location>
        <begin position="535"/>
        <end position="547"/>
    </location>
</feature>
<feature type="strand" evidence="32">
    <location>
        <begin position="554"/>
        <end position="557"/>
    </location>
</feature>
<feature type="strand" evidence="32">
    <location>
        <begin position="564"/>
        <end position="569"/>
    </location>
</feature>
<feature type="strand" evidence="32">
    <location>
        <begin position="575"/>
        <end position="578"/>
    </location>
</feature>
<feature type="strand" evidence="34">
    <location>
        <begin position="580"/>
        <end position="582"/>
    </location>
</feature>
<feature type="strand" evidence="32">
    <location>
        <begin position="585"/>
        <end position="592"/>
    </location>
</feature>
<feature type="helix" evidence="32">
    <location>
        <begin position="595"/>
        <end position="602"/>
    </location>
</feature>
<feature type="strand" evidence="33">
    <location>
        <begin position="604"/>
        <end position="606"/>
    </location>
</feature>
<feature type="strand" evidence="33">
    <location>
        <begin position="608"/>
        <end position="610"/>
    </location>
</feature>
<feature type="helix" evidence="32">
    <location>
        <begin position="612"/>
        <end position="621"/>
    </location>
</feature>
<feature type="helix" evidence="32">
    <location>
        <begin position="627"/>
        <end position="631"/>
    </location>
</feature>
<feature type="strand" evidence="32">
    <location>
        <begin position="633"/>
        <end position="638"/>
    </location>
</feature>
<feature type="turn" evidence="32">
    <location>
        <begin position="639"/>
        <end position="641"/>
    </location>
</feature>
<feature type="strand" evidence="32">
    <location>
        <begin position="642"/>
        <end position="648"/>
    </location>
</feature>
<feature type="helix" evidence="32">
    <location>
        <begin position="656"/>
        <end position="672"/>
    </location>
</feature>
<feature type="turn" evidence="32">
    <location>
        <begin position="675"/>
        <end position="677"/>
    </location>
</feature>
<feature type="strand" evidence="32">
    <location>
        <begin position="683"/>
        <end position="692"/>
    </location>
</feature>
<feature type="helix" evidence="32">
    <location>
        <begin position="697"/>
        <end position="699"/>
    </location>
</feature>
<feature type="helix" evidence="32">
    <location>
        <begin position="702"/>
        <end position="719"/>
    </location>
</feature>
<feature type="strand" evidence="32">
    <location>
        <begin position="722"/>
        <end position="735"/>
    </location>
</feature>
<feature type="helix" evidence="32">
    <location>
        <begin position="737"/>
        <end position="739"/>
    </location>
</feature>
<feature type="helix" evidence="32">
    <location>
        <begin position="740"/>
        <end position="748"/>
    </location>
</feature>
<feature type="turn" evidence="32">
    <location>
        <begin position="749"/>
        <end position="751"/>
    </location>
</feature>
<feature type="strand" evidence="32">
    <location>
        <begin position="753"/>
        <end position="758"/>
    </location>
</feature>
<feature type="strand" evidence="32">
    <location>
        <begin position="766"/>
        <end position="773"/>
    </location>
</feature>
<feature type="helix" evidence="32">
    <location>
        <begin position="774"/>
        <end position="776"/>
    </location>
</feature>
<feature type="helix" evidence="32">
    <location>
        <begin position="780"/>
        <end position="787"/>
    </location>
</feature>
<feature type="turn" evidence="32">
    <location>
        <begin position="788"/>
        <end position="790"/>
    </location>
</feature>
<feature type="strand" evidence="32">
    <location>
        <begin position="793"/>
        <end position="803"/>
    </location>
</feature>
<feature type="strand" evidence="36">
    <location>
        <begin position="811"/>
        <end position="813"/>
    </location>
</feature>
<feature type="helix" evidence="32">
    <location>
        <begin position="814"/>
        <end position="825"/>
    </location>
</feature>
<feature type="helix" evidence="32">
    <location>
        <begin position="835"/>
        <end position="838"/>
    </location>
</feature>
<proteinExistence type="evidence at protein level"/>
<organism>
    <name type="scientific">Saccharomyces cerevisiae (strain ATCC 204508 / S288c)</name>
    <name type="common">Baker's yeast</name>
    <dbReference type="NCBI Taxonomy" id="559292"/>
    <lineage>
        <taxon>Eukaryota</taxon>
        <taxon>Fungi</taxon>
        <taxon>Dikarya</taxon>
        <taxon>Ascomycota</taxon>
        <taxon>Saccharomycotina</taxon>
        <taxon>Saccharomycetes</taxon>
        <taxon>Saccharomycetales</taxon>
        <taxon>Saccharomycetaceae</taxon>
        <taxon>Saccharomyces</taxon>
    </lineage>
</organism>
<comment type="function">
    <text evidence="6 8 9 16">Catalyzes the GTP-dependent ribosomal translocation step during translation elongation (PubMed:14976550, PubMed:16950777, PubMed:17082187, PubMed:29069440). During this step, the ribosome changes from the pre-translocational (PRE) to the post-translocational (POST) state as the newly formed A-site-bound peptidyl-tRNA and P-site-bound deacylated tRNA move to the P and E sites, respectively (PubMed:14976550, PubMed:16950777, PubMed:17082187). Catalyzes the coordinated movement of the two tRNA molecules, the mRNA and conformational changes in the ribosome (PubMed:14976550, PubMed:16950777, PubMed:17082187).</text>
</comment>
<comment type="catalytic activity">
    <reaction evidence="8 16">
        <text>GTP + H2O = GDP + phosphate + H(+)</text>
        <dbReference type="Rhea" id="RHEA:19669"/>
        <dbReference type="ChEBI" id="CHEBI:15377"/>
        <dbReference type="ChEBI" id="CHEBI:15378"/>
        <dbReference type="ChEBI" id="CHEBI:37565"/>
        <dbReference type="ChEBI" id="CHEBI:43474"/>
        <dbReference type="ChEBI" id="CHEBI:58189"/>
    </reaction>
    <physiologicalReaction direction="left-to-right" evidence="8 16">
        <dbReference type="Rhea" id="RHEA:19670"/>
    </physiologicalReaction>
</comment>
<comment type="activity regulation">
    <text evidence="3 6 9 20">Inhibited by fusidic acid and sordarin, which prevent the release of eEF2 from the ribosome after the translocation step (PubMed:12692531, PubMed:14976550, PubMed:17082187, PubMed:9452424). While fusidic acid acts on all eukaryotic eEF2, sordarin specifically binds and inhibits only selected fungal eEF2 (PubMed:17082187, PubMed:9452424).</text>
</comment>
<comment type="biophysicochemical properties">
    <kinetics>
        <KM>0.01 mM for GTP</KM>
    </kinetics>
</comment>
<comment type="pathway">
    <text evidence="21">Protein biosynthesis; polypeptide chain elongation.</text>
</comment>
<comment type="subunit">
    <text evidence="2 3 6 7 15 16">Binds to 80S ribosomes (PubMed:12692531, PubMed:14976550, PubMed:15316019, PubMed:27115996). Actively translating ribosomes show mutually exclusive binding of eIF5a (HYP2 or ANB1) and EFT1/eEF2 (PubMed:27115996). Interacts with the 40S ribosomal subunit protein RPL9A; the interaction is direct (PubMed:14976550). Interacts with the 60S ribosomal subunit proteins RPL12A; the interaction is direct (PubMed:14976550). Interacts with RPS23A; the interaction is direct (PubMed:14976550). Interacts with 18S rRNA; the interaction is direct (PubMed:14976550). Interacts with 25S rRNA; the interaction is direct (PubMed:14976550). Interacts with RPL0 (PubMed:12410829). Interacts with STM1; promoting ribosome inactivation (PubMed:29069440).</text>
</comment>
<comment type="interaction">
    <interactant intactId="EBI-6333">
        <id>P32324</id>
    </interactant>
    <interactant intactId="EBI-6090">
        <id>P32461</id>
        <label>DPH2</label>
    </interactant>
    <organismsDiffer>false</organismsDiffer>
    <experiments>3</experiments>
</comment>
<comment type="interaction">
    <interactant intactId="EBI-6333">
        <id>P32324</id>
    </interactant>
    <interactant intactId="EBI-6333">
        <id>P32324</id>
        <label>EFT2</label>
    </interactant>
    <organismsDiffer>false</organismsDiffer>
    <experiments>5</experiments>
</comment>
<comment type="interaction">
    <interactant intactId="EBI-6333">
        <id>P32324</id>
    </interactant>
    <interactant intactId="EBI-28374">
        <id>P42842</id>
        <label>EMW1</label>
    </interactant>
    <organismsDiffer>false</organismsDiffer>
    <experiments>4</experiments>
</comment>
<comment type="interaction">
    <interactant intactId="EBI-6333">
        <id>P32324</id>
    </interactant>
    <interactant intactId="EBI-15447">
        <id>P05317</id>
        <label>RPP0</label>
    </interactant>
    <organismsDiffer>false</organismsDiffer>
    <experiments>3</experiments>
</comment>
<comment type="interaction">
    <interactant intactId="EBI-6333">
        <id>P32324</id>
    </interactant>
    <interactant intactId="EBI-4090">
        <id>P52286</id>
        <label>SKP1</label>
    </interactant>
    <organismsDiffer>false</organismsDiffer>
    <experiments>2</experiments>
</comment>
<comment type="subcellular location">
    <subcellularLocation>
        <location evidence="4">Cytoplasm</location>
    </subcellularLocation>
</comment>
<comment type="PTM">
    <text evidence="7 8 10">(Microbial infection) Diphthamide can be ADP-ribosylated by diphtheria toxin and by Pseudomonas exotoxin A, thus abolishing its function.</text>
</comment>
<comment type="miscellaneous">
    <text evidence="5">Present with 160782 molecules/cell in log phase SD medium.</text>
</comment>
<comment type="miscellaneous">
    <text evidence="21">There are 2 genes for eEF2 in yeast.</text>
</comment>
<comment type="similarity">
    <text evidence="1">Belongs to the TRAFAC class translation factor GTPase superfamily. Classic translation factor GTPase family. EF-G/EF-2 subfamily.</text>
</comment>
<evidence type="ECO:0000255" key="1">
    <source>
        <dbReference type="PROSITE-ProRule" id="PRU01059"/>
    </source>
</evidence>
<evidence type="ECO:0000269" key="2">
    <source>
    </source>
</evidence>
<evidence type="ECO:0000269" key="3">
    <source>
    </source>
</evidence>
<evidence type="ECO:0000269" key="4">
    <source>
    </source>
</evidence>
<evidence type="ECO:0000269" key="5">
    <source>
    </source>
</evidence>
<evidence type="ECO:0000269" key="6">
    <source>
    </source>
</evidence>
<evidence type="ECO:0000269" key="7">
    <source>
    </source>
</evidence>
<evidence type="ECO:0000269" key="8">
    <source>
    </source>
</evidence>
<evidence type="ECO:0000269" key="9">
    <source>
    </source>
</evidence>
<evidence type="ECO:0000269" key="10">
    <source>
    </source>
</evidence>
<evidence type="ECO:0000269" key="11">
    <source>
    </source>
</evidence>
<evidence type="ECO:0000269" key="12">
    <source>
    </source>
</evidence>
<evidence type="ECO:0000269" key="13">
    <source>
    </source>
</evidence>
<evidence type="ECO:0000269" key="14">
    <source>
    </source>
</evidence>
<evidence type="ECO:0000269" key="15">
    <source>
    </source>
</evidence>
<evidence type="ECO:0000269" key="16">
    <source>
    </source>
</evidence>
<evidence type="ECO:0000269" key="17">
    <source>
    </source>
</evidence>
<evidence type="ECO:0000269" key="18">
    <source>
    </source>
</evidence>
<evidence type="ECO:0000269" key="19">
    <source>
    </source>
</evidence>
<evidence type="ECO:0000269" key="20">
    <source>
    </source>
</evidence>
<evidence type="ECO:0000305" key="21"/>
<evidence type="ECO:0000305" key="22">
    <source>
    </source>
</evidence>
<evidence type="ECO:0000305" key="23">
    <source>
    </source>
</evidence>
<evidence type="ECO:0007744" key="24">
    <source>
        <dbReference type="PDB" id="1N0U"/>
    </source>
</evidence>
<evidence type="ECO:0007744" key="25">
    <source>
        <dbReference type="PDB" id="1N0V"/>
    </source>
</evidence>
<evidence type="ECO:0007744" key="26">
    <source>
        <dbReference type="PDB" id="1U2R"/>
    </source>
</evidence>
<evidence type="ECO:0007744" key="27">
    <source>
        <dbReference type="PDB" id="2E1R"/>
    </source>
</evidence>
<evidence type="ECO:0007744" key="28">
    <source>
        <dbReference type="PDB" id="2NPF"/>
    </source>
</evidence>
<evidence type="ECO:0007744" key="29">
    <source>
        <dbReference type="PDB" id="4V4B"/>
    </source>
</evidence>
<evidence type="ECO:0007744" key="30">
    <source>
    </source>
</evidence>
<evidence type="ECO:0007744" key="31">
    <source>
    </source>
</evidence>
<evidence type="ECO:0007829" key="32">
    <source>
        <dbReference type="PDB" id="1N0U"/>
    </source>
</evidence>
<evidence type="ECO:0007829" key="33">
    <source>
        <dbReference type="PDB" id="1N0V"/>
    </source>
</evidence>
<evidence type="ECO:0007829" key="34">
    <source>
        <dbReference type="PDB" id="1ZM9"/>
    </source>
</evidence>
<evidence type="ECO:0007829" key="35">
    <source>
        <dbReference type="PDB" id="2E1R"/>
    </source>
</evidence>
<evidence type="ECO:0007829" key="36">
    <source>
        <dbReference type="PDB" id="2ZIT"/>
    </source>
</evidence>
<evidence type="ECO:0007829" key="37">
    <source>
        <dbReference type="PDB" id="3B82"/>
    </source>
</evidence>
<keyword id="KW-0002">3D-structure</keyword>
<keyword id="KW-0963">Cytoplasm</keyword>
<keyword id="KW-0903">Direct protein sequencing</keyword>
<keyword id="KW-0251">Elongation factor</keyword>
<keyword id="KW-0342">GTP-binding</keyword>
<keyword id="KW-0378">Hydrolase</keyword>
<keyword id="KW-1017">Isopeptide bond</keyword>
<keyword id="KW-0488">Methylation</keyword>
<keyword id="KW-0547">Nucleotide-binding</keyword>
<keyword id="KW-0597">Phosphoprotein</keyword>
<keyword id="KW-0648">Protein biosynthesis</keyword>
<keyword id="KW-1185">Reference proteome</keyword>
<keyword id="KW-0694">RNA-binding</keyword>
<keyword id="KW-0699">rRNA-binding</keyword>
<keyword id="KW-0832">Ubl conjugation</keyword>